<evidence type="ECO:0000255" key="1">
    <source>
        <dbReference type="HAMAP-Rule" id="MF_00651"/>
    </source>
</evidence>
<reference key="1">
    <citation type="journal article" date="2011" name="J. Bacteriol.">
        <title>Comparative genomics of 28 Salmonella enterica isolates: evidence for CRISPR-mediated adaptive sublineage evolution.</title>
        <authorList>
            <person name="Fricke W.F."/>
            <person name="Mammel M.K."/>
            <person name="McDermott P.F."/>
            <person name="Tartera C."/>
            <person name="White D.G."/>
            <person name="Leclerc J.E."/>
            <person name="Ravel J."/>
            <person name="Cebula T.A."/>
        </authorList>
    </citation>
    <scope>NUCLEOTIDE SEQUENCE [LARGE SCALE GENOMIC DNA]</scope>
    <source>
        <strain>CVM19633</strain>
    </source>
</reference>
<comment type="function">
    <text evidence="1">Could be a nuclease involved in processing of the 5'-end of pre-16S rRNA.</text>
</comment>
<comment type="subcellular location">
    <subcellularLocation>
        <location evidence="1">Cytoplasm</location>
    </subcellularLocation>
</comment>
<comment type="similarity">
    <text evidence="1">Belongs to the YqgF nuclease family.</text>
</comment>
<organism>
    <name type="scientific">Salmonella schwarzengrund (strain CVM19633)</name>
    <dbReference type="NCBI Taxonomy" id="439843"/>
    <lineage>
        <taxon>Bacteria</taxon>
        <taxon>Pseudomonadati</taxon>
        <taxon>Pseudomonadota</taxon>
        <taxon>Gammaproteobacteria</taxon>
        <taxon>Enterobacterales</taxon>
        <taxon>Enterobacteriaceae</taxon>
        <taxon>Salmonella</taxon>
    </lineage>
</organism>
<gene>
    <name evidence="1" type="primary">yqgF</name>
    <name type="ordered locus">SeSA_A3271</name>
</gene>
<protein>
    <recommendedName>
        <fullName evidence="1">Putative pre-16S rRNA nuclease</fullName>
        <ecNumber evidence="1">3.1.-.-</ecNumber>
    </recommendedName>
</protein>
<dbReference type="EC" id="3.1.-.-" evidence="1"/>
<dbReference type="EMBL" id="CP001127">
    <property type="protein sequence ID" value="ACF88850.1"/>
    <property type="molecule type" value="Genomic_DNA"/>
</dbReference>
<dbReference type="SMR" id="B4TV66"/>
<dbReference type="KEGG" id="sew:SeSA_A3271"/>
<dbReference type="HOGENOM" id="CLU_098240_3_0_6"/>
<dbReference type="Proteomes" id="UP000001865">
    <property type="component" value="Chromosome"/>
</dbReference>
<dbReference type="GO" id="GO:0005829">
    <property type="term" value="C:cytosol"/>
    <property type="evidence" value="ECO:0007669"/>
    <property type="project" value="TreeGrafter"/>
</dbReference>
<dbReference type="GO" id="GO:0004518">
    <property type="term" value="F:nuclease activity"/>
    <property type="evidence" value="ECO:0007669"/>
    <property type="project" value="UniProtKB-KW"/>
</dbReference>
<dbReference type="GO" id="GO:0000967">
    <property type="term" value="P:rRNA 5'-end processing"/>
    <property type="evidence" value="ECO:0007669"/>
    <property type="project" value="UniProtKB-UniRule"/>
</dbReference>
<dbReference type="CDD" id="cd16964">
    <property type="entry name" value="YqgF"/>
    <property type="match status" value="1"/>
</dbReference>
<dbReference type="FunFam" id="3.30.420.140:FF:000002">
    <property type="entry name" value="Putative pre-16S rRNA nuclease"/>
    <property type="match status" value="1"/>
</dbReference>
<dbReference type="Gene3D" id="3.30.420.140">
    <property type="entry name" value="YqgF/RNase H-like domain"/>
    <property type="match status" value="1"/>
</dbReference>
<dbReference type="HAMAP" id="MF_00651">
    <property type="entry name" value="Nuclease_YqgF"/>
    <property type="match status" value="1"/>
</dbReference>
<dbReference type="InterPro" id="IPR012337">
    <property type="entry name" value="RNaseH-like_sf"/>
</dbReference>
<dbReference type="InterPro" id="IPR005227">
    <property type="entry name" value="YqgF"/>
</dbReference>
<dbReference type="InterPro" id="IPR006641">
    <property type="entry name" value="YqgF/RNaseH-like_dom"/>
</dbReference>
<dbReference type="InterPro" id="IPR037027">
    <property type="entry name" value="YqgF/RNaseH-like_dom_sf"/>
</dbReference>
<dbReference type="NCBIfam" id="TIGR00250">
    <property type="entry name" value="RNAse_H_YqgF"/>
    <property type="match status" value="1"/>
</dbReference>
<dbReference type="PANTHER" id="PTHR33317">
    <property type="entry name" value="POLYNUCLEOTIDYL TRANSFERASE, RIBONUCLEASE H-LIKE SUPERFAMILY PROTEIN"/>
    <property type="match status" value="1"/>
</dbReference>
<dbReference type="PANTHER" id="PTHR33317:SF4">
    <property type="entry name" value="POLYNUCLEOTIDYL TRANSFERASE, RIBONUCLEASE H-LIKE SUPERFAMILY PROTEIN"/>
    <property type="match status" value="1"/>
</dbReference>
<dbReference type="Pfam" id="PF03652">
    <property type="entry name" value="RuvX"/>
    <property type="match status" value="1"/>
</dbReference>
<dbReference type="SMART" id="SM00732">
    <property type="entry name" value="YqgFc"/>
    <property type="match status" value="1"/>
</dbReference>
<dbReference type="SUPFAM" id="SSF53098">
    <property type="entry name" value="Ribonuclease H-like"/>
    <property type="match status" value="1"/>
</dbReference>
<keyword id="KW-0963">Cytoplasm</keyword>
<keyword id="KW-0378">Hydrolase</keyword>
<keyword id="KW-0540">Nuclease</keyword>
<keyword id="KW-0690">Ribosome biogenesis</keyword>
<accession>B4TV66</accession>
<feature type="chain" id="PRO_1000131073" description="Putative pre-16S rRNA nuclease">
    <location>
        <begin position="1"/>
        <end position="138"/>
    </location>
</feature>
<sequence length="138" mass="15218">MSDTLLAFDFGTKSIGVAIGQRITGTARPLPAIKAQDGTPDWTLIERLLKEWQPDEIIVGLPLNMDGTEQPLTARARKFANRIHGRFGVTVTLHDERLSTVEARSGLFERGGYRALNKGKVDSASAVIILESYFEQGY</sequence>
<name>YQGF_SALSV</name>
<proteinExistence type="inferred from homology"/>